<sequence length="1032" mass="114335">MIPEAFQPRAMKHTTTVLMLALSSRFWSVCADFPEVYGGESAGFGPVFEEQPLDTIYPEESPEEKITLTCRTRANPPASYRWRLNNAELVLAEGSDPHYSVSEGNLLISSPDKSKHAGNYTCVASNQYGSVTSRRARVQFGYLDMFSTDEREAVYVKEGQGAVLLCAPPPHFPEDLSFRWMLNEFPEFIPLDQRRFVSQSTGNLYISTVRSTDSGNYSCFVSSPAIAKSVFSKFIPLVPIAERSLRKYPADIKVKSPDSWALLGQNVTLECFALGNPIPQIRWRKLDGVLPPLRHDVSMSGALLHLYSLQYEDEGLYECEADNSKGKDWHKTHLYVEGAPDWLEQISSSEVDIGGDYIMSCQASGKPKPHVHFLKNGHMYMKGHEVRFSRLGFEDSGMYQCVAENRHGVIHANAELRVFASAPSFQYNPVKPKLLGARNGRVVFECRPRAAPRPNITWSKGTELLHNSSRISIWLDGSLELLNISKSDEGKYTCFAENDRGRANSTGSLSITDATKITLAPSNADVSVGEDARMECVASHDPGLDLTFIWSLDGHTINLQRDAQHYQRKMDSASGTSSSELLITHTQLRHAGRYSCTAQTPVDNTTASAELVVRGPPGPPGGVRVDEVTSDSVRVLWSHGTDNLSPISRYTVQLRESAAQQDWRDAATSPVNVEGNAEMATVVNLLPWTEYEFRVIATNTLGTGPPSEPSPKTTTREARPIVAPSDIGGGGGTSRELTITWTPVQSQYYYGSNFGYIIAFKPHNDPEWLRVTVTDPEAQKYVHKDPKIPPSTRFEVKMKAFNSQGEGPFSNSAFIYSAQDVPAEAPIITEARALSATEAIVIWVPVQLPTVERYQVRYWRESVENEASAQRVLVSSRENHTRLDNMKPDSHYLVEVRACNGAGYGPASQRNRIYTKKSPPSRPPKIISTKMHYSGTSINIAWEKVESLNNESTVAGYKVLYRQHGQPSGTLYTTEKQSIDLPMRRGEYLVEVRAHSEGGDGAVAQVRITGSAPAPALASALLLLPLLWTLML</sequence>
<accession>Q8AXZ4</accession>
<gene>
    <name type="primary">cntn1a</name>
    <name type="synonym">cntn1</name>
</gene>
<comment type="function">
    <text evidence="1">Mediates cell surface interactions during nervous system development.</text>
</comment>
<comment type="subcellular location">
    <subcellularLocation>
        <location evidence="1">Cell membrane</location>
        <topology evidence="1">Lipid-anchor</topology>
        <topology evidence="1">GPI-anchor</topology>
    </subcellularLocation>
</comment>
<comment type="tissue specificity">
    <text evidence="6">Expressed in brain.</text>
</comment>
<comment type="developmental stage">
    <text evidence="6">First detectable at 16 hours post-fertilization (hpf) in trigeminal and Rohon-Beard neurons. At 18-24 hpf, it is also weakly expressed in discrete cell clusters in the hindbrain, in the anterior lateral line/acoustic ganglion and in spinal motor neurons.</text>
</comment>
<comment type="similarity">
    <text evidence="7">Belongs to the immunoglobulin superfamily. Contactin family.</text>
</comment>
<proteinExistence type="evidence at transcript level"/>
<evidence type="ECO:0000250" key="1"/>
<evidence type="ECO:0000255" key="2"/>
<evidence type="ECO:0000255" key="3">
    <source>
        <dbReference type="PROSITE-ProRule" id="PRU00114"/>
    </source>
</evidence>
<evidence type="ECO:0000255" key="4">
    <source>
        <dbReference type="PROSITE-ProRule" id="PRU00316"/>
    </source>
</evidence>
<evidence type="ECO:0000256" key="5">
    <source>
        <dbReference type="SAM" id="MobiDB-lite"/>
    </source>
</evidence>
<evidence type="ECO:0000269" key="6">
    <source>
    </source>
</evidence>
<evidence type="ECO:0000305" key="7"/>
<dbReference type="EMBL" id="AY138255">
    <property type="protein sequence ID" value="AAN17734.1"/>
    <property type="molecule type" value="mRNA"/>
</dbReference>
<dbReference type="SMR" id="Q8AXZ4"/>
<dbReference type="FunCoup" id="Q8AXZ4">
    <property type="interactions" value="1360"/>
</dbReference>
<dbReference type="GlyCosmos" id="Q8AXZ4">
    <property type="glycosylation" value="10 sites, No reported glycans"/>
</dbReference>
<dbReference type="AGR" id="ZFIN:ZDB-GENE-030427-1"/>
<dbReference type="ZFIN" id="ZDB-GENE-030427-1">
    <property type="gene designation" value="cntn1a"/>
</dbReference>
<dbReference type="InParanoid" id="Q8AXZ4"/>
<dbReference type="PhylomeDB" id="Q8AXZ4"/>
<dbReference type="PRO" id="PR:Q8AXZ4"/>
<dbReference type="Proteomes" id="UP000000437">
    <property type="component" value="Unplaced"/>
</dbReference>
<dbReference type="GO" id="GO:0030424">
    <property type="term" value="C:axon"/>
    <property type="evidence" value="ECO:0000318"/>
    <property type="project" value="GO_Central"/>
</dbReference>
<dbReference type="GO" id="GO:0005886">
    <property type="term" value="C:plasma membrane"/>
    <property type="evidence" value="ECO:0000318"/>
    <property type="project" value="GO_Central"/>
</dbReference>
<dbReference type="GO" id="GO:0098552">
    <property type="term" value="C:side of membrane"/>
    <property type="evidence" value="ECO:0007669"/>
    <property type="project" value="UniProtKB-KW"/>
</dbReference>
<dbReference type="GO" id="GO:0098632">
    <property type="term" value="F:cell-cell adhesion mediator activity"/>
    <property type="evidence" value="ECO:0000318"/>
    <property type="project" value="GO_Central"/>
</dbReference>
<dbReference type="GO" id="GO:0007411">
    <property type="term" value="P:axon guidance"/>
    <property type="evidence" value="ECO:0000318"/>
    <property type="project" value="GO_Central"/>
</dbReference>
<dbReference type="GO" id="GO:0098609">
    <property type="term" value="P:cell-cell adhesion"/>
    <property type="evidence" value="ECO:0000318"/>
    <property type="project" value="GO_Central"/>
</dbReference>
<dbReference type="CDD" id="cd00063">
    <property type="entry name" value="FN3"/>
    <property type="match status" value="4"/>
</dbReference>
<dbReference type="FunFam" id="2.60.40.10:FF:000035">
    <property type="entry name" value="Contactin 1"/>
    <property type="match status" value="1"/>
</dbReference>
<dbReference type="FunFam" id="2.60.40.10:FF:000044">
    <property type="entry name" value="Contactin 1"/>
    <property type="match status" value="1"/>
</dbReference>
<dbReference type="FunFam" id="2.60.40.10:FF:000047">
    <property type="entry name" value="Contactin 1"/>
    <property type="match status" value="1"/>
</dbReference>
<dbReference type="FunFam" id="2.60.40.10:FF:000052">
    <property type="entry name" value="Contactin 1"/>
    <property type="match status" value="1"/>
</dbReference>
<dbReference type="FunFam" id="2.60.40.10:FF:000054">
    <property type="entry name" value="Contactin 1"/>
    <property type="match status" value="1"/>
</dbReference>
<dbReference type="FunFam" id="2.60.40.10:FF:000064">
    <property type="entry name" value="Contactin 1"/>
    <property type="match status" value="1"/>
</dbReference>
<dbReference type="FunFam" id="2.60.40.10:FF:000004">
    <property type="entry name" value="DCC isoform 1"/>
    <property type="match status" value="1"/>
</dbReference>
<dbReference type="FunFam" id="2.60.40.10:FF:000005">
    <property type="entry name" value="Neuronal cell adhesion molecule"/>
    <property type="match status" value="1"/>
</dbReference>
<dbReference type="FunFam" id="2.60.40.10:FF:000028">
    <property type="entry name" value="Neuronal cell adhesion molecule"/>
    <property type="match status" value="1"/>
</dbReference>
<dbReference type="Gene3D" id="2.60.40.10">
    <property type="entry name" value="Immunoglobulins"/>
    <property type="match status" value="10"/>
</dbReference>
<dbReference type="InterPro" id="IPR003961">
    <property type="entry name" value="FN3_dom"/>
</dbReference>
<dbReference type="InterPro" id="IPR036116">
    <property type="entry name" value="FN3_sf"/>
</dbReference>
<dbReference type="InterPro" id="IPR007110">
    <property type="entry name" value="Ig-like_dom"/>
</dbReference>
<dbReference type="InterPro" id="IPR036179">
    <property type="entry name" value="Ig-like_dom_sf"/>
</dbReference>
<dbReference type="InterPro" id="IPR013783">
    <property type="entry name" value="Ig-like_fold"/>
</dbReference>
<dbReference type="InterPro" id="IPR013098">
    <property type="entry name" value="Ig_I-set"/>
</dbReference>
<dbReference type="InterPro" id="IPR003599">
    <property type="entry name" value="Ig_sub"/>
</dbReference>
<dbReference type="InterPro" id="IPR003598">
    <property type="entry name" value="Ig_sub2"/>
</dbReference>
<dbReference type="InterPro" id="IPR013151">
    <property type="entry name" value="Immunoglobulin_dom"/>
</dbReference>
<dbReference type="PANTHER" id="PTHR44170:SF10">
    <property type="entry name" value="CONTACTIN-1"/>
    <property type="match status" value="1"/>
</dbReference>
<dbReference type="PANTHER" id="PTHR44170">
    <property type="entry name" value="PROTEIN SIDEKICK"/>
    <property type="match status" value="1"/>
</dbReference>
<dbReference type="Pfam" id="PF00041">
    <property type="entry name" value="fn3"/>
    <property type="match status" value="2"/>
</dbReference>
<dbReference type="Pfam" id="PF07679">
    <property type="entry name" value="I-set"/>
    <property type="match status" value="1"/>
</dbReference>
<dbReference type="Pfam" id="PF00047">
    <property type="entry name" value="ig"/>
    <property type="match status" value="1"/>
</dbReference>
<dbReference type="Pfam" id="PF13927">
    <property type="entry name" value="Ig_3"/>
    <property type="match status" value="3"/>
</dbReference>
<dbReference type="SMART" id="SM00060">
    <property type="entry name" value="FN3"/>
    <property type="match status" value="4"/>
</dbReference>
<dbReference type="SMART" id="SM00409">
    <property type="entry name" value="IG"/>
    <property type="match status" value="6"/>
</dbReference>
<dbReference type="SMART" id="SM00408">
    <property type="entry name" value="IGc2"/>
    <property type="match status" value="6"/>
</dbReference>
<dbReference type="SUPFAM" id="SSF49265">
    <property type="entry name" value="Fibronectin type III"/>
    <property type="match status" value="2"/>
</dbReference>
<dbReference type="SUPFAM" id="SSF48726">
    <property type="entry name" value="Immunoglobulin"/>
    <property type="match status" value="6"/>
</dbReference>
<dbReference type="PROSITE" id="PS50853">
    <property type="entry name" value="FN3"/>
    <property type="match status" value="4"/>
</dbReference>
<dbReference type="PROSITE" id="PS50835">
    <property type="entry name" value="IG_LIKE"/>
    <property type="match status" value="6"/>
</dbReference>
<name>CNT1A_DANRE</name>
<feature type="signal peptide" evidence="2">
    <location>
        <begin position="1"/>
        <end position="31"/>
    </location>
</feature>
<feature type="chain" id="PRO_0000014693" description="Contactin-1a">
    <location>
        <begin position="32"/>
        <end position="1010"/>
    </location>
</feature>
<feature type="propeptide" id="PRO_0000014694" description="Removed in mature form" evidence="2">
    <location>
        <begin position="1011"/>
        <end position="1032"/>
    </location>
</feature>
<feature type="domain" description="Ig-like C2-type 1">
    <location>
        <begin position="46"/>
        <end position="139"/>
    </location>
</feature>
<feature type="domain" description="Ig-like C2-type 2">
    <location>
        <begin position="144"/>
        <end position="231"/>
    </location>
</feature>
<feature type="domain" description="Ig-like C2-type 3">
    <location>
        <begin position="249"/>
        <end position="335"/>
    </location>
</feature>
<feature type="domain" description="Ig-like C2-type 4">
    <location>
        <begin position="340"/>
        <end position="417"/>
    </location>
</feature>
<feature type="domain" description="Ig-like C2-type 5">
    <location>
        <begin position="423"/>
        <end position="510"/>
    </location>
</feature>
<feature type="domain" description="Ig-like C2-type 6">
    <location>
        <begin position="515"/>
        <end position="612"/>
    </location>
</feature>
<feature type="domain" description="Fibronectin type-III 1" evidence="4">
    <location>
        <begin position="619"/>
        <end position="718"/>
    </location>
</feature>
<feature type="domain" description="Fibronectin type-III 2" evidence="4">
    <location>
        <begin position="723"/>
        <end position="820"/>
    </location>
</feature>
<feature type="domain" description="Fibronectin type-III 3" evidence="4">
    <location>
        <begin position="825"/>
        <end position="918"/>
    </location>
</feature>
<feature type="domain" description="Fibronectin type-III 4" evidence="4">
    <location>
        <begin position="920"/>
        <end position="1015"/>
    </location>
</feature>
<feature type="region of interest" description="Disordered" evidence="5">
    <location>
        <begin position="699"/>
        <end position="729"/>
    </location>
</feature>
<feature type="region of interest" description="Disordered" evidence="5">
    <location>
        <begin position="907"/>
        <end position="926"/>
    </location>
</feature>
<feature type="lipid moiety-binding region" description="GPI-anchor amidated glycine" evidence="2">
    <location>
        <position position="1010"/>
    </location>
</feature>
<feature type="glycosylation site" description="N-linked (GlcNAc...) asparagine" evidence="2">
    <location>
        <position position="119"/>
    </location>
</feature>
<feature type="glycosylation site" description="N-linked (GlcNAc...) asparagine" evidence="2">
    <location>
        <position position="216"/>
    </location>
</feature>
<feature type="glycosylation site" description="N-linked (GlcNAc...) asparagine" evidence="2">
    <location>
        <position position="266"/>
    </location>
</feature>
<feature type="glycosylation site" description="N-linked (GlcNAc...) asparagine" evidence="2">
    <location>
        <position position="455"/>
    </location>
</feature>
<feature type="glycosylation site" description="N-linked (GlcNAc...) asparagine" evidence="2">
    <location>
        <position position="467"/>
    </location>
</feature>
<feature type="glycosylation site" description="N-linked (GlcNAc...) asparagine" evidence="2">
    <location>
        <position position="483"/>
    </location>
</feature>
<feature type="glycosylation site" description="N-linked (GlcNAc...) asparagine" evidence="2">
    <location>
        <position position="504"/>
    </location>
</feature>
<feature type="glycosylation site" description="N-linked (GlcNAc...) asparagine" evidence="2">
    <location>
        <position position="604"/>
    </location>
</feature>
<feature type="glycosylation site" description="N-linked (GlcNAc...) asparagine" evidence="2">
    <location>
        <position position="879"/>
    </location>
</feature>
<feature type="glycosylation site" description="N-linked (GlcNAc...) asparagine" evidence="2">
    <location>
        <position position="950"/>
    </location>
</feature>
<feature type="disulfide bond" evidence="3">
    <location>
        <begin position="70"/>
        <end position="122"/>
    </location>
</feature>
<feature type="disulfide bond" evidence="3">
    <location>
        <begin position="166"/>
        <end position="219"/>
    </location>
</feature>
<feature type="disulfide bond" evidence="3">
    <location>
        <begin position="271"/>
        <end position="319"/>
    </location>
</feature>
<feature type="disulfide bond" evidence="3">
    <location>
        <begin position="361"/>
        <end position="401"/>
    </location>
</feature>
<feature type="disulfide bond" evidence="3">
    <location>
        <begin position="446"/>
        <end position="494"/>
    </location>
</feature>
<feature type="disulfide bond" evidence="3">
    <location>
        <begin position="536"/>
        <end position="596"/>
    </location>
</feature>
<reference key="1">
    <citation type="journal article" date="2002" name="Mech. Dev.">
        <title>Expression of the zebrafish recognition molecule F3/F11/contactin in a subset of differentiating neurons is regulated by cofactors associated with LIM domains.</title>
        <authorList>
            <person name="Gimnopoulos D."/>
            <person name="Becker C.G."/>
            <person name="Ostendorff H.P."/>
            <person name="Bach I."/>
            <person name="Schachner M."/>
            <person name="Becker T."/>
        </authorList>
    </citation>
    <scope>NUCLEOTIDE SEQUENCE [MRNA]</scope>
    <scope>TISSUE SPECIFICITY</scope>
    <scope>DEVELOPMENTAL STAGE</scope>
</reference>
<protein>
    <recommendedName>
        <fullName>Contactin-1a</fullName>
    </recommendedName>
    <alternativeName>
        <fullName>F3/F11/contactin</fullName>
    </alternativeName>
    <alternativeName>
        <fullName>Neural cell recognition molecule F11</fullName>
    </alternativeName>
</protein>
<organism>
    <name type="scientific">Danio rerio</name>
    <name type="common">Zebrafish</name>
    <name type="synonym">Brachydanio rerio</name>
    <dbReference type="NCBI Taxonomy" id="7955"/>
    <lineage>
        <taxon>Eukaryota</taxon>
        <taxon>Metazoa</taxon>
        <taxon>Chordata</taxon>
        <taxon>Craniata</taxon>
        <taxon>Vertebrata</taxon>
        <taxon>Euteleostomi</taxon>
        <taxon>Actinopterygii</taxon>
        <taxon>Neopterygii</taxon>
        <taxon>Teleostei</taxon>
        <taxon>Ostariophysi</taxon>
        <taxon>Cypriniformes</taxon>
        <taxon>Danionidae</taxon>
        <taxon>Danioninae</taxon>
        <taxon>Danio</taxon>
    </lineage>
</organism>
<keyword id="KW-0130">Cell adhesion</keyword>
<keyword id="KW-1003">Cell membrane</keyword>
<keyword id="KW-1015">Disulfide bond</keyword>
<keyword id="KW-0325">Glycoprotein</keyword>
<keyword id="KW-0336">GPI-anchor</keyword>
<keyword id="KW-0393">Immunoglobulin domain</keyword>
<keyword id="KW-0449">Lipoprotein</keyword>
<keyword id="KW-0472">Membrane</keyword>
<keyword id="KW-1185">Reference proteome</keyword>
<keyword id="KW-0677">Repeat</keyword>
<keyword id="KW-0732">Signal</keyword>